<evidence type="ECO:0000255" key="1">
    <source>
        <dbReference type="HAMAP-Rule" id="MF_00374"/>
    </source>
</evidence>
<evidence type="ECO:0000305" key="2"/>
<feature type="chain" id="PRO_1000007447" description="Large ribosomal subunit protein uL29">
    <location>
        <begin position="1"/>
        <end position="72"/>
    </location>
</feature>
<accession>A4XLS2</accession>
<reference key="1">
    <citation type="submission" date="2007-04" db="EMBL/GenBank/DDBJ databases">
        <title>Genome sequence of the thermophilic hydrogen-producing bacterium Caldicellulosiruptor saccharolyticus DSM 8903.</title>
        <authorList>
            <person name="Copeland A."/>
            <person name="Lucas S."/>
            <person name="Lapidus A."/>
            <person name="Barry K."/>
            <person name="Detter J.C."/>
            <person name="Glavina del Rio T."/>
            <person name="Hammon N."/>
            <person name="Israni S."/>
            <person name="Dalin E."/>
            <person name="Tice H."/>
            <person name="Pitluck S."/>
            <person name="Kiss H."/>
            <person name="Brettin T."/>
            <person name="Bruce D."/>
            <person name="Han C."/>
            <person name="Schmutz J."/>
            <person name="Larimer F."/>
            <person name="Land M."/>
            <person name="Hauser L."/>
            <person name="Kyrpides N."/>
            <person name="Lykidis A."/>
            <person name="van de Werken H.J.G."/>
            <person name="Verhaart M.R.A."/>
            <person name="VanFossen A.L."/>
            <person name="Lewis D.L."/>
            <person name="Nichols J.D."/>
            <person name="Goorissen H.P."/>
            <person name="van Niel E.W.J."/>
            <person name="Stams F.J.M."/>
            <person name="Willquist K.U."/>
            <person name="Ward D.E."/>
            <person name="van der Oost J."/>
            <person name="Kelly R.M."/>
            <person name="Kengen S.M.W."/>
            <person name="Richardson P."/>
        </authorList>
    </citation>
    <scope>NUCLEOTIDE SEQUENCE [LARGE SCALE GENOMIC DNA]</scope>
    <source>
        <strain>ATCC 43494 / DSM 8903 / Tp8T 6331</strain>
    </source>
</reference>
<sequence>MKASKIREMTNQELHNELKKLKNELFNLRFQLATNQLENPMRIREVKRTIARIKTILRERELEQEKANKNAK</sequence>
<proteinExistence type="inferred from homology"/>
<gene>
    <name evidence="1" type="primary">rpmC</name>
    <name type="ordered locus">Csac_2279</name>
</gene>
<name>RL29_CALS8</name>
<comment type="similarity">
    <text evidence="1">Belongs to the universal ribosomal protein uL29 family.</text>
</comment>
<keyword id="KW-0687">Ribonucleoprotein</keyword>
<keyword id="KW-0689">Ribosomal protein</keyword>
<organism>
    <name type="scientific">Caldicellulosiruptor saccharolyticus (strain ATCC 43494 / DSM 8903 / Tp8T 6331)</name>
    <dbReference type="NCBI Taxonomy" id="351627"/>
    <lineage>
        <taxon>Bacteria</taxon>
        <taxon>Bacillati</taxon>
        <taxon>Bacillota</taxon>
        <taxon>Bacillota incertae sedis</taxon>
        <taxon>Caldicellulosiruptorales</taxon>
        <taxon>Caldicellulosiruptoraceae</taxon>
        <taxon>Caldicellulosiruptor</taxon>
    </lineage>
</organism>
<dbReference type="EMBL" id="CP000679">
    <property type="protein sequence ID" value="ABP67857.1"/>
    <property type="molecule type" value="Genomic_DNA"/>
</dbReference>
<dbReference type="RefSeq" id="WP_011917783.1">
    <property type="nucleotide sequence ID" value="NC_009437.1"/>
</dbReference>
<dbReference type="SMR" id="A4XLS2"/>
<dbReference type="STRING" id="351627.Csac_2279"/>
<dbReference type="KEGG" id="csc:Csac_2279"/>
<dbReference type="eggNOG" id="COG0255">
    <property type="taxonomic scope" value="Bacteria"/>
</dbReference>
<dbReference type="HOGENOM" id="CLU_158491_5_2_9"/>
<dbReference type="OrthoDB" id="9815192at2"/>
<dbReference type="Proteomes" id="UP000000256">
    <property type="component" value="Chromosome"/>
</dbReference>
<dbReference type="GO" id="GO:0022625">
    <property type="term" value="C:cytosolic large ribosomal subunit"/>
    <property type="evidence" value="ECO:0007669"/>
    <property type="project" value="TreeGrafter"/>
</dbReference>
<dbReference type="GO" id="GO:0003735">
    <property type="term" value="F:structural constituent of ribosome"/>
    <property type="evidence" value="ECO:0007669"/>
    <property type="project" value="InterPro"/>
</dbReference>
<dbReference type="GO" id="GO:0006412">
    <property type="term" value="P:translation"/>
    <property type="evidence" value="ECO:0007669"/>
    <property type="project" value="UniProtKB-UniRule"/>
</dbReference>
<dbReference type="CDD" id="cd00427">
    <property type="entry name" value="Ribosomal_L29_HIP"/>
    <property type="match status" value="1"/>
</dbReference>
<dbReference type="FunFam" id="1.10.287.310:FF:000001">
    <property type="entry name" value="50S ribosomal protein L29"/>
    <property type="match status" value="1"/>
</dbReference>
<dbReference type="Gene3D" id="1.10.287.310">
    <property type="match status" value="1"/>
</dbReference>
<dbReference type="HAMAP" id="MF_00374">
    <property type="entry name" value="Ribosomal_uL29"/>
    <property type="match status" value="1"/>
</dbReference>
<dbReference type="InterPro" id="IPR050063">
    <property type="entry name" value="Ribosomal_protein_uL29"/>
</dbReference>
<dbReference type="InterPro" id="IPR001854">
    <property type="entry name" value="Ribosomal_uL29"/>
</dbReference>
<dbReference type="InterPro" id="IPR018254">
    <property type="entry name" value="Ribosomal_uL29_CS"/>
</dbReference>
<dbReference type="InterPro" id="IPR036049">
    <property type="entry name" value="Ribosomal_uL29_sf"/>
</dbReference>
<dbReference type="NCBIfam" id="TIGR00012">
    <property type="entry name" value="L29"/>
    <property type="match status" value="1"/>
</dbReference>
<dbReference type="PANTHER" id="PTHR10916">
    <property type="entry name" value="60S RIBOSOMAL PROTEIN L35/50S RIBOSOMAL PROTEIN L29"/>
    <property type="match status" value="1"/>
</dbReference>
<dbReference type="PANTHER" id="PTHR10916:SF0">
    <property type="entry name" value="LARGE RIBOSOMAL SUBUNIT PROTEIN UL29C"/>
    <property type="match status" value="1"/>
</dbReference>
<dbReference type="Pfam" id="PF00831">
    <property type="entry name" value="Ribosomal_L29"/>
    <property type="match status" value="1"/>
</dbReference>
<dbReference type="SUPFAM" id="SSF46561">
    <property type="entry name" value="Ribosomal protein L29 (L29p)"/>
    <property type="match status" value="1"/>
</dbReference>
<dbReference type="PROSITE" id="PS00579">
    <property type="entry name" value="RIBOSOMAL_L29"/>
    <property type="match status" value="1"/>
</dbReference>
<protein>
    <recommendedName>
        <fullName evidence="1">Large ribosomal subunit protein uL29</fullName>
    </recommendedName>
    <alternativeName>
        <fullName evidence="2">50S ribosomal protein L29</fullName>
    </alternativeName>
</protein>